<sequence length="437" mass="47237">MKKLLSIEKVKGREILDSRGNPTVEAEVILSDGSVGMAAAPSGASTGAFEAVELRDGDKGRYLGNGVLNAVEHVKKELSEAVCGRNPLNQVEIDAAMIDADGTENKGKLGANAILAVSLATAKAAATAVSLPLYQYLGGTNARTLPVPMMNIINGGKHADSSLNIQEFMIMPVGAKSFSEALEHSTTVFHTLKKLLKADGYVTAVGDEGGFAPKFNSDEQALEYIVEAIKKAGFEPGSDFYIAMDAAATEMYDEAKKIGKEGNYLFWKSGELKTVDEMIDYWENLCNKYPILSLEDGLAEEDWEGWKKLTERLGSRIQLVGDDLFVTNTNRISKGIKEDISNSVLIKFNQIGSLTETLNAIEMTKNQGWTAIVSHRSGETEDTTIADIAVATNAGQIKTGAPSRSDRVAKYNQLLRIEQELGQAAIYPGKKAFKVLK</sequence>
<keyword id="KW-0963">Cytoplasm</keyword>
<keyword id="KW-0324">Glycolysis</keyword>
<keyword id="KW-0456">Lyase</keyword>
<keyword id="KW-0460">Magnesium</keyword>
<keyword id="KW-0479">Metal-binding</keyword>
<keyword id="KW-1185">Reference proteome</keyword>
<keyword id="KW-0964">Secreted</keyword>
<feature type="chain" id="PRO_0000337614" description="Enolase">
    <location>
        <begin position="1"/>
        <end position="437"/>
    </location>
</feature>
<feature type="active site" description="Proton donor" evidence="1">
    <location>
        <position position="208"/>
    </location>
</feature>
<feature type="active site" description="Proton acceptor" evidence="1">
    <location>
        <position position="347"/>
    </location>
</feature>
<feature type="binding site" evidence="1">
    <location>
        <position position="166"/>
    </location>
    <ligand>
        <name>(2R)-2-phosphoglycerate</name>
        <dbReference type="ChEBI" id="CHEBI:58289"/>
    </ligand>
</feature>
<feature type="binding site" evidence="1">
    <location>
        <position position="245"/>
    </location>
    <ligand>
        <name>Mg(2+)</name>
        <dbReference type="ChEBI" id="CHEBI:18420"/>
    </ligand>
</feature>
<feature type="binding site" evidence="1">
    <location>
        <position position="295"/>
    </location>
    <ligand>
        <name>Mg(2+)</name>
        <dbReference type="ChEBI" id="CHEBI:18420"/>
    </ligand>
</feature>
<feature type="binding site" evidence="1">
    <location>
        <position position="322"/>
    </location>
    <ligand>
        <name>Mg(2+)</name>
        <dbReference type="ChEBI" id="CHEBI:18420"/>
    </ligand>
</feature>
<feature type="binding site" evidence="1">
    <location>
        <position position="347"/>
    </location>
    <ligand>
        <name>(2R)-2-phosphoglycerate</name>
        <dbReference type="ChEBI" id="CHEBI:58289"/>
    </ligand>
</feature>
<feature type="binding site" evidence="1">
    <location>
        <position position="376"/>
    </location>
    <ligand>
        <name>(2R)-2-phosphoglycerate</name>
        <dbReference type="ChEBI" id="CHEBI:58289"/>
    </ligand>
</feature>
<feature type="binding site" evidence="1">
    <location>
        <position position="377"/>
    </location>
    <ligand>
        <name>(2R)-2-phosphoglycerate</name>
        <dbReference type="ChEBI" id="CHEBI:58289"/>
    </ligand>
</feature>
<feature type="binding site" evidence="1">
    <location>
        <position position="398"/>
    </location>
    <ligand>
        <name>(2R)-2-phosphoglycerate</name>
        <dbReference type="ChEBI" id="CHEBI:58289"/>
    </ligand>
</feature>
<dbReference type="EC" id="4.2.1.11" evidence="1"/>
<dbReference type="EMBL" id="CP000885">
    <property type="protein sequence ID" value="ABX43358.1"/>
    <property type="molecule type" value="Genomic_DNA"/>
</dbReference>
<dbReference type="RefSeq" id="WP_012201009.1">
    <property type="nucleotide sequence ID" value="NC_010001.1"/>
</dbReference>
<dbReference type="SMR" id="A9KQ46"/>
<dbReference type="STRING" id="357809.Cphy_3001"/>
<dbReference type="KEGG" id="cpy:Cphy_3001"/>
<dbReference type="eggNOG" id="COG0148">
    <property type="taxonomic scope" value="Bacteria"/>
</dbReference>
<dbReference type="HOGENOM" id="CLU_031223_2_1_9"/>
<dbReference type="OrthoDB" id="9804716at2"/>
<dbReference type="UniPathway" id="UPA00109">
    <property type="reaction ID" value="UER00187"/>
</dbReference>
<dbReference type="Proteomes" id="UP000000370">
    <property type="component" value="Chromosome"/>
</dbReference>
<dbReference type="GO" id="GO:0009986">
    <property type="term" value="C:cell surface"/>
    <property type="evidence" value="ECO:0007669"/>
    <property type="project" value="UniProtKB-SubCell"/>
</dbReference>
<dbReference type="GO" id="GO:0005576">
    <property type="term" value="C:extracellular region"/>
    <property type="evidence" value="ECO:0007669"/>
    <property type="project" value="UniProtKB-SubCell"/>
</dbReference>
<dbReference type="GO" id="GO:0000015">
    <property type="term" value="C:phosphopyruvate hydratase complex"/>
    <property type="evidence" value="ECO:0007669"/>
    <property type="project" value="InterPro"/>
</dbReference>
<dbReference type="GO" id="GO:0000287">
    <property type="term" value="F:magnesium ion binding"/>
    <property type="evidence" value="ECO:0007669"/>
    <property type="project" value="UniProtKB-UniRule"/>
</dbReference>
<dbReference type="GO" id="GO:0004634">
    <property type="term" value="F:phosphopyruvate hydratase activity"/>
    <property type="evidence" value="ECO:0007669"/>
    <property type="project" value="UniProtKB-UniRule"/>
</dbReference>
<dbReference type="GO" id="GO:0006096">
    <property type="term" value="P:glycolytic process"/>
    <property type="evidence" value="ECO:0007669"/>
    <property type="project" value="UniProtKB-UniRule"/>
</dbReference>
<dbReference type="CDD" id="cd03313">
    <property type="entry name" value="enolase"/>
    <property type="match status" value="1"/>
</dbReference>
<dbReference type="FunFam" id="3.20.20.120:FF:000001">
    <property type="entry name" value="Enolase"/>
    <property type="match status" value="1"/>
</dbReference>
<dbReference type="FunFam" id="3.30.390.10:FF:000001">
    <property type="entry name" value="Enolase"/>
    <property type="match status" value="1"/>
</dbReference>
<dbReference type="Gene3D" id="3.20.20.120">
    <property type="entry name" value="Enolase-like C-terminal domain"/>
    <property type="match status" value="1"/>
</dbReference>
<dbReference type="Gene3D" id="3.30.390.10">
    <property type="entry name" value="Enolase-like, N-terminal domain"/>
    <property type="match status" value="1"/>
</dbReference>
<dbReference type="HAMAP" id="MF_00318">
    <property type="entry name" value="Enolase"/>
    <property type="match status" value="1"/>
</dbReference>
<dbReference type="InterPro" id="IPR000941">
    <property type="entry name" value="Enolase"/>
</dbReference>
<dbReference type="InterPro" id="IPR036849">
    <property type="entry name" value="Enolase-like_C_sf"/>
</dbReference>
<dbReference type="InterPro" id="IPR029017">
    <property type="entry name" value="Enolase-like_N"/>
</dbReference>
<dbReference type="InterPro" id="IPR020810">
    <property type="entry name" value="Enolase_C"/>
</dbReference>
<dbReference type="InterPro" id="IPR020809">
    <property type="entry name" value="Enolase_CS"/>
</dbReference>
<dbReference type="InterPro" id="IPR020811">
    <property type="entry name" value="Enolase_N"/>
</dbReference>
<dbReference type="NCBIfam" id="TIGR01060">
    <property type="entry name" value="eno"/>
    <property type="match status" value="1"/>
</dbReference>
<dbReference type="PANTHER" id="PTHR11902">
    <property type="entry name" value="ENOLASE"/>
    <property type="match status" value="1"/>
</dbReference>
<dbReference type="PANTHER" id="PTHR11902:SF1">
    <property type="entry name" value="ENOLASE"/>
    <property type="match status" value="1"/>
</dbReference>
<dbReference type="Pfam" id="PF00113">
    <property type="entry name" value="Enolase_C"/>
    <property type="match status" value="1"/>
</dbReference>
<dbReference type="Pfam" id="PF03952">
    <property type="entry name" value="Enolase_N"/>
    <property type="match status" value="1"/>
</dbReference>
<dbReference type="PIRSF" id="PIRSF001400">
    <property type="entry name" value="Enolase"/>
    <property type="match status" value="1"/>
</dbReference>
<dbReference type="PRINTS" id="PR00148">
    <property type="entry name" value="ENOLASE"/>
</dbReference>
<dbReference type="SFLD" id="SFLDS00001">
    <property type="entry name" value="Enolase"/>
    <property type="match status" value="1"/>
</dbReference>
<dbReference type="SFLD" id="SFLDF00002">
    <property type="entry name" value="enolase"/>
    <property type="match status" value="1"/>
</dbReference>
<dbReference type="SMART" id="SM01192">
    <property type="entry name" value="Enolase_C"/>
    <property type="match status" value="1"/>
</dbReference>
<dbReference type="SMART" id="SM01193">
    <property type="entry name" value="Enolase_N"/>
    <property type="match status" value="1"/>
</dbReference>
<dbReference type="SUPFAM" id="SSF51604">
    <property type="entry name" value="Enolase C-terminal domain-like"/>
    <property type="match status" value="1"/>
</dbReference>
<dbReference type="SUPFAM" id="SSF54826">
    <property type="entry name" value="Enolase N-terminal domain-like"/>
    <property type="match status" value="1"/>
</dbReference>
<dbReference type="PROSITE" id="PS00164">
    <property type="entry name" value="ENOLASE"/>
    <property type="match status" value="1"/>
</dbReference>
<gene>
    <name evidence="1" type="primary">eno</name>
    <name type="ordered locus">Cphy_3001</name>
</gene>
<proteinExistence type="inferred from homology"/>
<organism>
    <name type="scientific">Lachnoclostridium phytofermentans (strain ATCC 700394 / DSM 18823 / ISDg)</name>
    <name type="common">Clostridium phytofermentans</name>
    <dbReference type="NCBI Taxonomy" id="357809"/>
    <lineage>
        <taxon>Bacteria</taxon>
        <taxon>Bacillati</taxon>
        <taxon>Bacillota</taxon>
        <taxon>Clostridia</taxon>
        <taxon>Lachnospirales</taxon>
        <taxon>Lachnospiraceae</taxon>
    </lineage>
</organism>
<reference key="1">
    <citation type="submission" date="2007-11" db="EMBL/GenBank/DDBJ databases">
        <title>Complete genome sequence of Clostridium phytofermentans ISDg.</title>
        <authorList>
            <person name="Leschine S.B."/>
            <person name="Warnick T.A."/>
            <person name="Blanchard J.L."/>
            <person name="Schnell D.J."/>
            <person name="Petit E.L."/>
            <person name="LaTouf W.G."/>
            <person name="Copeland A."/>
            <person name="Lucas S."/>
            <person name="Lapidus A."/>
            <person name="Barry K."/>
            <person name="Glavina del Rio T."/>
            <person name="Dalin E."/>
            <person name="Tice H."/>
            <person name="Pitluck S."/>
            <person name="Kiss H."/>
            <person name="Brettin T."/>
            <person name="Bruce D."/>
            <person name="Detter J.C."/>
            <person name="Han C."/>
            <person name="Kuske C."/>
            <person name="Schmutz J."/>
            <person name="Larimer F."/>
            <person name="Land M."/>
            <person name="Hauser L."/>
            <person name="Kyrpides N."/>
            <person name="Kim E.A."/>
            <person name="Richardson P."/>
        </authorList>
    </citation>
    <scope>NUCLEOTIDE SEQUENCE [LARGE SCALE GENOMIC DNA]</scope>
    <source>
        <strain>ATCC 700394 / DSM 18823 / ISDg</strain>
    </source>
</reference>
<accession>A9KQ46</accession>
<name>ENO_LACP7</name>
<evidence type="ECO:0000255" key="1">
    <source>
        <dbReference type="HAMAP-Rule" id="MF_00318"/>
    </source>
</evidence>
<comment type="function">
    <text evidence="1">Catalyzes the reversible conversion of 2-phosphoglycerate (2-PG) into phosphoenolpyruvate (PEP). It is essential for the degradation of carbohydrates via glycolysis.</text>
</comment>
<comment type="catalytic activity">
    <reaction evidence="1">
        <text>(2R)-2-phosphoglycerate = phosphoenolpyruvate + H2O</text>
        <dbReference type="Rhea" id="RHEA:10164"/>
        <dbReference type="ChEBI" id="CHEBI:15377"/>
        <dbReference type="ChEBI" id="CHEBI:58289"/>
        <dbReference type="ChEBI" id="CHEBI:58702"/>
        <dbReference type="EC" id="4.2.1.11"/>
    </reaction>
</comment>
<comment type="cofactor">
    <cofactor evidence="1">
        <name>Mg(2+)</name>
        <dbReference type="ChEBI" id="CHEBI:18420"/>
    </cofactor>
    <text evidence="1">Binds a second Mg(2+) ion via substrate during catalysis.</text>
</comment>
<comment type="pathway">
    <text evidence="1">Carbohydrate degradation; glycolysis; pyruvate from D-glyceraldehyde 3-phosphate: step 4/5.</text>
</comment>
<comment type="subcellular location">
    <subcellularLocation>
        <location evidence="1">Cytoplasm</location>
    </subcellularLocation>
    <subcellularLocation>
        <location evidence="1">Secreted</location>
    </subcellularLocation>
    <subcellularLocation>
        <location evidence="1">Cell surface</location>
    </subcellularLocation>
    <text evidence="1">Fractions of enolase are present in both the cytoplasm and on the cell surface.</text>
</comment>
<comment type="similarity">
    <text evidence="1">Belongs to the enolase family.</text>
</comment>
<protein>
    <recommendedName>
        <fullName evidence="1">Enolase</fullName>
        <ecNumber evidence="1">4.2.1.11</ecNumber>
    </recommendedName>
    <alternativeName>
        <fullName evidence="1">2-phospho-D-glycerate hydro-lyase</fullName>
    </alternativeName>
    <alternativeName>
        <fullName evidence="1">2-phosphoglycerate dehydratase</fullName>
    </alternativeName>
</protein>